<sequence length="395" mass="41271">MAVYCSENFSVYPQPSLHPPGAAAAAAAAAAAAAAAAASSGQRAGGYALGDYGAPANAGYLWGMNSPAPYLQGPPGSGAAASPFLPPASYGCSRGGQLVGSPSGPGSPSAGGAELSWLSLASQEELLKLVRPPYSYSALIAMAIQSAPERKLTLSHIYQYVAENFPFYKRSKAGWQNSIRHNLSLNDCFRKVPRDEDDPGKGNYWTLDPNCEKMFDNGNFRRKRKRRSEPNTPATTAAASSLGGLKAEEERPIPASGKPCGNSPPPELDPSPSARDHPKSSSPSGIISSTPSCLSTFFSGMSSLSGGGSRLTGGLSTDLHHRNFSAGQLSGGTFTPSSSSSQEVPSPEQLQRVAGPSPAYYSSFHPSSGSQGAQYNHYYNFTVNSLIYTRDGTEV</sequence>
<dbReference type="SMR" id="A0A8V0YY16"/>
<dbReference type="Ensembl" id="ENSGALT00010040546.1">
    <property type="protein sequence ID" value="ENSGALP00010023538.1"/>
    <property type="gene ID" value="ENSGALG00010016805.1"/>
</dbReference>
<dbReference type="GeneTree" id="ENSGT00940000161176"/>
<dbReference type="OrthoDB" id="5954824at2759"/>
<dbReference type="PRO" id="PR:A0A8V0YY16"/>
<dbReference type="Proteomes" id="UP000000539">
    <property type="component" value="Chromosome 4"/>
</dbReference>
<dbReference type="GO" id="GO:0005634">
    <property type="term" value="C:nucleus"/>
    <property type="evidence" value="ECO:0007669"/>
    <property type="project" value="UniProtKB-SubCell"/>
</dbReference>
<dbReference type="GO" id="GO:0000981">
    <property type="term" value="F:DNA-binding transcription factor activity, RNA polymerase II-specific"/>
    <property type="evidence" value="ECO:0000250"/>
    <property type="project" value="UniProtKB"/>
</dbReference>
<dbReference type="GO" id="GO:0000978">
    <property type="term" value="F:RNA polymerase II cis-regulatory region sequence-specific DNA binding"/>
    <property type="evidence" value="ECO:0000318"/>
    <property type="project" value="GO_Central"/>
</dbReference>
<dbReference type="GO" id="GO:0009653">
    <property type="term" value="P:anatomical structure morphogenesis"/>
    <property type="evidence" value="ECO:0000318"/>
    <property type="project" value="GO_Central"/>
</dbReference>
<dbReference type="GO" id="GO:0030154">
    <property type="term" value="P:cell differentiation"/>
    <property type="evidence" value="ECO:0000318"/>
    <property type="project" value="GO_Central"/>
</dbReference>
<dbReference type="GO" id="GO:1905040">
    <property type="term" value="P:otic placode development"/>
    <property type="evidence" value="ECO:0000315"/>
    <property type="project" value="UniProtKB"/>
</dbReference>
<dbReference type="GO" id="GO:0006357">
    <property type="term" value="P:regulation of transcription by RNA polymerase II"/>
    <property type="evidence" value="ECO:0000318"/>
    <property type="project" value="GO_Central"/>
</dbReference>
<dbReference type="FunFam" id="1.10.10.10:FF:000016">
    <property type="entry name" value="Forkhead box protein I1"/>
    <property type="match status" value="1"/>
</dbReference>
<dbReference type="Gene3D" id="1.10.10.10">
    <property type="entry name" value="Winged helix-like DNA-binding domain superfamily/Winged helix DNA-binding domain"/>
    <property type="match status" value="1"/>
</dbReference>
<dbReference type="InterPro" id="IPR001766">
    <property type="entry name" value="Fork_head_dom"/>
</dbReference>
<dbReference type="InterPro" id="IPR050211">
    <property type="entry name" value="FOX_domain-containing"/>
</dbReference>
<dbReference type="InterPro" id="IPR018122">
    <property type="entry name" value="TF_fork_head_CS_1"/>
</dbReference>
<dbReference type="InterPro" id="IPR030456">
    <property type="entry name" value="TF_fork_head_CS_2"/>
</dbReference>
<dbReference type="InterPro" id="IPR036388">
    <property type="entry name" value="WH-like_DNA-bd_sf"/>
</dbReference>
<dbReference type="InterPro" id="IPR036390">
    <property type="entry name" value="WH_DNA-bd_sf"/>
</dbReference>
<dbReference type="PANTHER" id="PTHR11829">
    <property type="entry name" value="FORKHEAD BOX PROTEIN"/>
    <property type="match status" value="1"/>
</dbReference>
<dbReference type="PANTHER" id="PTHR11829:SF310">
    <property type="entry name" value="FORKHEAD BOX PROTEIN I3"/>
    <property type="match status" value="1"/>
</dbReference>
<dbReference type="Pfam" id="PF00250">
    <property type="entry name" value="Forkhead"/>
    <property type="match status" value="1"/>
</dbReference>
<dbReference type="PRINTS" id="PR00053">
    <property type="entry name" value="FORKHEAD"/>
</dbReference>
<dbReference type="SMART" id="SM00339">
    <property type="entry name" value="FH"/>
    <property type="match status" value="1"/>
</dbReference>
<dbReference type="SUPFAM" id="SSF46785">
    <property type="entry name" value="Winged helix' DNA-binding domain"/>
    <property type="match status" value="1"/>
</dbReference>
<dbReference type="PROSITE" id="PS00657">
    <property type="entry name" value="FORK_HEAD_1"/>
    <property type="match status" value="1"/>
</dbReference>
<dbReference type="PROSITE" id="PS00658">
    <property type="entry name" value="FORK_HEAD_2"/>
    <property type="match status" value="1"/>
</dbReference>
<dbReference type="PROSITE" id="PS50039">
    <property type="entry name" value="FORK_HEAD_3"/>
    <property type="match status" value="1"/>
</dbReference>
<name>FOXI3_CHICK</name>
<accession>A0A8V0YY16</accession>
<keyword id="KW-0217">Developmental protein</keyword>
<keyword id="KW-0238">DNA-binding</keyword>
<keyword id="KW-0539">Nucleus</keyword>
<keyword id="KW-1185">Reference proteome</keyword>
<keyword id="KW-0804">Transcription</keyword>
<keyword id="KW-0805">Transcription regulation</keyword>
<evidence type="ECO:0000250" key="1">
    <source>
        <dbReference type="UniProtKB" id="A8MTJ6"/>
    </source>
</evidence>
<evidence type="ECO:0000255" key="2">
    <source>
        <dbReference type="PROSITE-ProRule" id="PRU00089"/>
    </source>
</evidence>
<evidence type="ECO:0000256" key="3">
    <source>
        <dbReference type="SAM" id="MobiDB-lite"/>
    </source>
</evidence>
<evidence type="ECO:0000269" key="4">
    <source>
    </source>
</evidence>
<evidence type="ECO:0000269" key="5">
    <source>
    </source>
</evidence>
<evidence type="ECO:0000303" key="6">
    <source>
    </source>
</evidence>
<evidence type="ECO:0000305" key="7"/>
<gene>
    <name evidence="6" type="primary">FOXI3</name>
</gene>
<organism>
    <name type="scientific">Gallus gallus</name>
    <name type="common">Chicken</name>
    <dbReference type="NCBI Taxonomy" id="9031"/>
    <lineage>
        <taxon>Eukaryota</taxon>
        <taxon>Metazoa</taxon>
        <taxon>Chordata</taxon>
        <taxon>Craniata</taxon>
        <taxon>Vertebrata</taxon>
        <taxon>Euteleostomi</taxon>
        <taxon>Archelosauria</taxon>
        <taxon>Archosauria</taxon>
        <taxon>Dinosauria</taxon>
        <taxon>Saurischia</taxon>
        <taxon>Theropoda</taxon>
        <taxon>Coelurosauria</taxon>
        <taxon>Aves</taxon>
        <taxon>Neognathae</taxon>
        <taxon>Galloanserae</taxon>
        <taxon>Galliformes</taxon>
        <taxon>Phasianidae</taxon>
        <taxon>Phasianinae</taxon>
        <taxon>Gallus</taxon>
    </lineage>
</organism>
<proteinExistence type="evidence at transcript level"/>
<feature type="chain" id="PRO_0000458755" description="Forkhead box protein I3">
    <location>
        <begin position="1"/>
        <end position="395"/>
    </location>
</feature>
<feature type="DNA-binding region" description="Fork-head" evidence="2">
    <location>
        <begin position="131"/>
        <end position="225"/>
    </location>
</feature>
<feature type="region of interest" description="Disordered" evidence="3">
    <location>
        <begin position="216"/>
        <end position="288"/>
    </location>
</feature>
<feature type="region of interest" description="Disordered" evidence="3">
    <location>
        <begin position="322"/>
        <end position="370"/>
    </location>
</feature>
<feature type="short sequence motif" description="Nuclear localization signal" evidence="1">
    <location>
        <begin position="221"/>
        <end position="227"/>
    </location>
</feature>
<feature type="compositionally biased region" description="Low complexity" evidence="3">
    <location>
        <begin position="234"/>
        <end position="245"/>
    </location>
</feature>
<feature type="compositionally biased region" description="Polar residues" evidence="3">
    <location>
        <begin position="325"/>
        <end position="335"/>
    </location>
</feature>
<feature type="compositionally biased region" description="Low complexity" evidence="3">
    <location>
        <begin position="336"/>
        <end position="349"/>
    </location>
</feature>
<reference key="1">
    <citation type="journal article" date="2004" name="Nature">
        <title>Sequence and comparative analysis of the chicken genome provide unique perspectives on vertebrate evolution.</title>
        <authorList>
            <person name="Hillier L.W."/>
            <person name="Miller W."/>
            <person name="Birney E."/>
            <person name="Warren W."/>
            <person name="Hardison R.C."/>
            <person name="Ponting C.P."/>
            <person name="Bork P."/>
            <person name="Burt D.W."/>
            <person name="Groenen M.A.M."/>
            <person name="Delany M.E."/>
            <person name="Dodgson J.B."/>
            <person name="Chinwalla A.T."/>
            <person name="Cliften P.F."/>
            <person name="Clifton S.W."/>
            <person name="Delehaunty K.D."/>
            <person name="Fronick C."/>
            <person name="Fulton R.S."/>
            <person name="Graves T.A."/>
            <person name="Kremitzki C."/>
            <person name="Layman D."/>
            <person name="Magrini V."/>
            <person name="McPherson J.D."/>
            <person name="Miner T.L."/>
            <person name="Minx P."/>
            <person name="Nash W.E."/>
            <person name="Nhan M.N."/>
            <person name="Nelson J.O."/>
            <person name="Oddy L.G."/>
            <person name="Pohl C.S."/>
            <person name="Randall-Maher J."/>
            <person name="Smith S.M."/>
            <person name="Wallis J.W."/>
            <person name="Yang S.-P."/>
            <person name="Romanov M.N."/>
            <person name="Rondelli C.M."/>
            <person name="Paton B."/>
            <person name="Smith J."/>
            <person name="Morrice D."/>
            <person name="Daniels L."/>
            <person name="Tempest H.G."/>
            <person name="Robertson L."/>
            <person name="Masabanda J.S."/>
            <person name="Griffin D.K."/>
            <person name="Vignal A."/>
            <person name="Fillon V."/>
            <person name="Jacobbson L."/>
            <person name="Kerje S."/>
            <person name="Andersson L."/>
            <person name="Crooijmans R.P."/>
            <person name="Aerts J."/>
            <person name="van der Poel J.J."/>
            <person name="Ellegren H."/>
            <person name="Caldwell R.B."/>
            <person name="Hubbard S.J."/>
            <person name="Grafham D.V."/>
            <person name="Kierzek A.M."/>
            <person name="McLaren S.R."/>
            <person name="Overton I.M."/>
            <person name="Arakawa H."/>
            <person name="Beattie K.J."/>
            <person name="Bezzubov Y."/>
            <person name="Boardman P.E."/>
            <person name="Bonfield J.K."/>
            <person name="Croning M.D.R."/>
            <person name="Davies R.M."/>
            <person name="Francis M.D."/>
            <person name="Humphray S.J."/>
            <person name="Scott C.E."/>
            <person name="Taylor R.G."/>
            <person name="Tickle C."/>
            <person name="Brown W.R.A."/>
            <person name="Rogers J."/>
            <person name="Buerstedde J.-M."/>
            <person name="Wilson S.A."/>
            <person name="Stubbs L."/>
            <person name="Ovcharenko I."/>
            <person name="Gordon L."/>
            <person name="Lucas S."/>
            <person name="Miller M.M."/>
            <person name="Inoko H."/>
            <person name="Shiina T."/>
            <person name="Kaufman J."/>
            <person name="Salomonsen J."/>
            <person name="Skjoedt K."/>
            <person name="Wong G.K.-S."/>
            <person name="Wang J."/>
            <person name="Liu B."/>
            <person name="Wang J."/>
            <person name="Yu J."/>
            <person name="Yang H."/>
            <person name="Nefedov M."/>
            <person name="Koriabine M."/>
            <person name="Dejong P.J."/>
            <person name="Goodstadt L."/>
            <person name="Webber C."/>
            <person name="Dickens N.J."/>
            <person name="Letunic I."/>
            <person name="Suyama M."/>
            <person name="Torrents D."/>
            <person name="von Mering C."/>
            <person name="Zdobnov E.M."/>
            <person name="Makova K."/>
            <person name="Nekrutenko A."/>
            <person name="Elnitski L."/>
            <person name="Eswara P."/>
            <person name="King D.C."/>
            <person name="Yang S.-P."/>
            <person name="Tyekucheva S."/>
            <person name="Radakrishnan A."/>
            <person name="Harris R.S."/>
            <person name="Chiaromonte F."/>
            <person name="Taylor J."/>
            <person name="He J."/>
            <person name="Rijnkels M."/>
            <person name="Griffiths-Jones S."/>
            <person name="Ureta-Vidal A."/>
            <person name="Hoffman M.M."/>
            <person name="Severin J."/>
            <person name="Searle S.M.J."/>
            <person name="Law A.S."/>
            <person name="Speed D."/>
            <person name="Waddington D."/>
            <person name="Cheng Z."/>
            <person name="Tuzun E."/>
            <person name="Eichler E."/>
            <person name="Bao Z."/>
            <person name="Flicek P."/>
            <person name="Shteynberg D.D."/>
            <person name="Brent M.R."/>
            <person name="Bye J.M."/>
            <person name="Huckle E.J."/>
            <person name="Chatterji S."/>
            <person name="Dewey C."/>
            <person name="Pachter L."/>
            <person name="Kouranov A."/>
            <person name="Mourelatos Z."/>
            <person name="Hatzigeorgiou A.G."/>
            <person name="Paterson A.H."/>
            <person name="Ivarie R."/>
            <person name="Brandstrom M."/>
            <person name="Axelsson E."/>
            <person name="Backstrom N."/>
            <person name="Berlin S."/>
            <person name="Webster M.T."/>
            <person name="Pourquie O."/>
            <person name="Reymond A."/>
            <person name="Ucla C."/>
            <person name="Antonarakis S.E."/>
            <person name="Long M."/>
            <person name="Emerson J.J."/>
            <person name="Betran E."/>
            <person name="Dupanloup I."/>
            <person name="Kaessmann H."/>
            <person name="Hinrichs A.S."/>
            <person name="Bejerano G."/>
            <person name="Furey T.S."/>
            <person name="Harte R.A."/>
            <person name="Raney B."/>
            <person name="Siepel A."/>
            <person name="Kent W.J."/>
            <person name="Haussler D."/>
            <person name="Eyras E."/>
            <person name="Castelo R."/>
            <person name="Abril J.F."/>
            <person name="Castellano S."/>
            <person name="Camara F."/>
            <person name="Parra G."/>
            <person name="Guigo R."/>
            <person name="Bourque G."/>
            <person name="Tesler G."/>
            <person name="Pevzner P.A."/>
            <person name="Smit A."/>
            <person name="Fulton L.A."/>
            <person name="Mardis E.R."/>
            <person name="Wilson R.K."/>
        </authorList>
    </citation>
    <scope>NUCLEOTIDE SEQUENCE [LARGE SCALE GENOMIC DNA]</scope>
    <source>
        <strain>Red jungle fowl</strain>
    </source>
</reference>
<reference key="2">
    <citation type="journal article" date="2013" name="Gene Expr. Patterns">
        <title>Expression of the Foxi2 and Foxi3 transcription factors during development of chicken sensory placodes and pharyngeal arches.</title>
        <authorList>
            <person name="Khatri S.B."/>
            <person name="Groves A.K."/>
        </authorList>
    </citation>
    <scope>TISSUE SPECIFICITY</scope>
</reference>
<reference key="3">
    <citation type="journal article" date="2014" name="Dev. Biol.">
        <title>Foxi3 is necessary for the induction of the chick otic placode in response to FGF signaling.</title>
        <authorList>
            <person name="Khatri S.B."/>
            <person name="Edlund R.K."/>
            <person name="Groves A.K."/>
        </authorList>
    </citation>
    <scope>FUNCTION</scope>
    <scope>TISSUE SPECIFICITY</scope>
</reference>
<comment type="function">
    <text evidence="5">Transcription factor required for pharyngeal arch development, which is involved in otic placode development.</text>
</comment>
<comment type="subcellular location">
    <subcellularLocation>
        <location evidence="1">Nucleus</location>
    </subcellularLocation>
</comment>
<comment type="tissue specificity">
    <text evidence="4 5">Initially expressed in the pre-placodal ectoderm surrounding the neural plate, which will give rise to all craniofacial sensory organs (PubMed:23124078, PubMed:24780628). Expression then becomes restricted to a region immediately anterior to the first pair of somites that will give rise to the otic and epibranchial placodes, before becoming down-regulated from this region and restricted to the ectoderm and endoderm of the pharyngeal arches (PubMed:23124078).</text>
</comment>
<protein>
    <recommendedName>
        <fullName evidence="7">Forkhead box protein I3</fullName>
    </recommendedName>
</protein>